<keyword id="KW-1185">Reference proteome</keyword>
<keyword id="KW-0687">Ribonucleoprotein</keyword>
<keyword id="KW-0689">Ribosomal protein</keyword>
<organism>
    <name type="scientific">Rhizobium etli (strain ATCC 51251 / DSM 11541 / JCM 21823 / NBRC 15573 / CFN 42)</name>
    <dbReference type="NCBI Taxonomy" id="347834"/>
    <lineage>
        <taxon>Bacteria</taxon>
        <taxon>Pseudomonadati</taxon>
        <taxon>Pseudomonadota</taxon>
        <taxon>Alphaproteobacteria</taxon>
        <taxon>Hyphomicrobiales</taxon>
        <taxon>Rhizobiaceae</taxon>
        <taxon>Rhizobium/Agrobacterium group</taxon>
        <taxon>Rhizobium</taxon>
    </lineage>
</organism>
<protein>
    <recommendedName>
        <fullName evidence="1">Large ribosomal subunit protein uL29</fullName>
    </recommendedName>
    <alternativeName>
        <fullName evidence="2">50S ribosomal protein L29</fullName>
    </alternativeName>
</protein>
<accession>Q2K9K8</accession>
<comment type="similarity">
    <text evidence="1">Belongs to the universal ribosomal protein uL29 family.</text>
</comment>
<feature type="chain" id="PRO_1000007577" description="Large ribosomal subunit protein uL29">
    <location>
        <begin position="1"/>
        <end position="66"/>
    </location>
</feature>
<dbReference type="EMBL" id="CP000133">
    <property type="protein sequence ID" value="ABC90478.1"/>
    <property type="molecule type" value="Genomic_DNA"/>
</dbReference>
<dbReference type="RefSeq" id="WP_011424983.1">
    <property type="nucleotide sequence ID" value="NC_007761.1"/>
</dbReference>
<dbReference type="SMR" id="Q2K9K8"/>
<dbReference type="KEGG" id="ret:RHE_CH01683"/>
<dbReference type="eggNOG" id="COG0255">
    <property type="taxonomic scope" value="Bacteria"/>
</dbReference>
<dbReference type="HOGENOM" id="CLU_158491_1_0_5"/>
<dbReference type="OrthoDB" id="9815192at2"/>
<dbReference type="Proteomes" id="UP000001936">
    <property type="component" value="Chromosome"/>
</dbReference>
<dbReference type="GO" id="GO:0022625">
    <property type="term" value="C:cytosolic large ribosomal subunit"/>
    <property type="evidence" value="ECO:0007669"/>
    <property type="project" value="TreeGrafter"/>
</dbReference>
<dbReference type="GO" id="GO:0003735">
    <property type="term" value="F:structural constituent of ribosome"/>
    <property type="evidence" value="ECO:0007669"/>
    <property type="project" value="InterPro"/>
</dbReference>
<dbReference type="GO" id="GO:0006412">
    <property type="term" value="P:translation"/>
    <property type="evidence" value="ECO:0007669"/>
    <property type="project" value="UniProtKB-UniRule"/>
</dbReference>
<dbReference type="CDD" id="cd00427">
    <property type="entry name" value="Ribosomal_L29_HIP"/>
    <property type="match status" value="1"/>
</dbReference>
<dbReference type="FunFam" id="1.10.287.310:FF:000001">
    <property type="entry name" value="50S ribosomal protein L29"/>
    <property type="match status" value="1"/>
</dbReference>
<dbReference type="Gene3D" id="1.10.287.310">
    <property type="match status" value="1"/>
</dbReference>
<dbReference type="HAMAP" id="MF_00374">
    <property type="entry name" value="Ribosomal_uL29"/>
    <property type="match status" value="1"/>
</dbReference>
<dbReference type="InterPro" id="IPR050063">
    <property type="entry name" value="Ribosomal_protein_uL29"/>
</dbReference>
<dbReference type="InterPro" id="IPR001854">
    <property type="entry name" value="Ribosomal_uL29"/>
</dbReference>
<dbReference type="InterPro" id="IPR018254">
    <property type="entry name" value="Ribosomal_uL29_CS"/>
</dbReference>
<dbReference type="InterPro" id="IPR036049">
    <property type="entry name" value="Ribosomal_uL29_sf"/>
</dbReference>
<dbReference type="NCBIfam" id="TIGR00012">
    <property type="entry name" value="L29"/>
    <property type="match status" value="1"/>
</dbReference>
<dbReference type="PANTHER" id="PTHR10916">
    <property type="entry name" value="60S RIBOSOMAL PROTEIN L35/50S RIBOSOMAL PROTEIN L29"/>
    <property type="match status" value="1"/>
</dbReference>
<dbReference type="PANTHER" id="PTHR10916:SF0">
    <property type="entry name" value="LARGE RIBOSOMAL SUBUNIT PROTEIN UL29C"/>
    <property type="match status" value="1"/>
</dbReference>
<dbReference type="Pfam" id="PF00831">
    <property type="entry name" value="Ribosomal_L29"/>
    <property type="match status" value="1"/>
</dbReference>
<dbReference type="SUPFAM" id="SSF46561">
    <property type="entry name" value="Ribosomal protein L29 (L29p)"/>
    <property type="match status" value="1"/>
</dbReference>
<dbReference type="PROSITE" id="PS00579">
    <property type="entry name" value="RIBOSOMAL_L29"/>
    <property type="match status" value="1"/>
</dbReference>
<proteinExistence type="inferred from homology"/>
<evidence type="ECO:0000255" key="1">
    <source>
        <dbReference type="HAMAP-Rule" id="MF_00374"/>
    </source>
</evidence>
<evidence type="ECO:0000305" key="2"/>
<sequence>MKASDVRALTADQLKEELAKLKKEQFNLRFQKATGQLEKSSRINEVRKDIARVKTIARQKAAEVKA</sequence>
<name>RL29_RHIEC</name>
<gene>
    <name evidence="1" type="primary">rpmC</name>
    <name type="ordered locus">RHE_CH01683</name>
</gene>
<reference key="1">
    <citation type="journal article" date="2006" name="Proc. Natl. Acad. Sci. U.S.A.">
        <title>The partitioned Rhizobium etli genome: genetic and metabolic redundancy in seven interacting replicons.</title>
        <authorList>
            <person name="Gonzalez V."/>
            <person name="Santamaria R.I."/>
            <person name="Bustos P."/>
            <person name="Hernandez-Gonzalez I."/>
            <person name="Medrano-Soto A."/>
            <person name="Moreno-Hagelsieb G."/>
            <person name="Janga S.C."/>
            <person name="Ramirez M.A."/>
            <person name="Jimenez-Jacinto V."/>
            <person name="Collado-Vides J."/>
            <person name="Davila G."/>
        </authorList>
    </citation>
    <scope>NUCLEOTIDE SEQUENCE [LARGE SCALE GENOMIC DNA]</scope>
    <source>
        <strain>ATCC 51251 / DSM 11541 / JCM 21823 / NBRC 15573 / CFN 42</strain>
    </source>
</reference>